<protein>
    <recommendedName>
        <fullName evidence="1">Cysteine--tRNA ligase</fullName>
        <ecNumber evidence="1">6.1.1.16</ecNumber>
    </recommendedName>
    <alternativeName>
        <fullName evidence="1">Cysteinyl-tRNA synthetase</fullName>
        <shortName evidence="1">CysRS</shortName>
    </alternativeName>
</protein>
<name>SYC_BURVG</name>
<comment type="catalytic activity">
    <reaction evidence="1">
        <text>tRNA(Cys) + L-cysteine + ATP = L-cysteinyl-tRNA(Cys) + AMP + diphosphate</text>
        <dbReference type="Rhea" id="RHEA:17773"/>
        <dbReference type="Rhea" id="RHEA-COMP:9661"/>
        <dbReference type="Rhea" id="RHEA-COMP:9679"/>
        <dbReference type="ChEBI" id="CHEBI:30616"/>
        <dbReference type="ChEBI" id="CHEBI:33019"/>
        <dbReference type="ChEBI" id="CHEBI:35235"/>
        <dbReference type="ChEBI" id="CHEBI:78442"/>
        <dbReference type="ChEBI" id="CHEBI:78517"/>
        <dbReference type="ChEBI" id="CHEBI:456215"/>
        <dbReference type="EC" id="6.1.1.16"/>
    </reaction>
</comment>
<comment type="cofactor">
    <cofactor evidence="1">
        <name>Zn(2+)</name>
        <dbReference type="ChEBI" id="CHEBI:29105"/>
    </cofactor>
    <text evidence="1">Binds 1 zinc ion per subunit.</text>
</comment>
<comment type="subunit">
    <text evidence="1">Monomer.</text>
</comment>
<comment type="subcellular location">
    <subcellularLocation>
        <location evidence="1">Cytoplasm</location>
    </subcellularLocation>
</comment>
<comment type="similarity">
    <text evidence="1">Belongs to the class-I aminoacyl-tRNA synthetase family.</text>
</comment>
<sequence>MESLRIYNTLARDKQVFVPRQPGEVRMYVCGITVYDYCHVGHARMLVVFDLVQRWLRAIGYRVTYVRNITDVDDKIIRRAVENGESIKSLTDRFIGAMHDDEAALGIQRPDIEPRATQFIPQMLGMIEQLEANGYAYQASDGDVNYSVRKFANYGKLSGKSLDDLRAGERVAANDAKEDPLDFVLWKRAKAEDPEGASWASKYGMGRPGWHIECSAMGCTLLGEHFDIHGGGQDLQFPHHENEIAQSEGATGQTFVNYWMHNGFVQVDNEKMSKSLGNFFTIREVLERYDAEVMRFFIVRTHYRSPLNYSDVHLDDARASLTRLYTALKDVEPDALALDWNEPYAQRFAAAMNDDINTPVAVATLFELAGEVNRTRDASLARQLKQLAGLLGLLGREPRAFLQQGAGSAHAGALAADEIEARIAARVAAKQAKDYAEADRIRAELLEAGIALEDKPGGSTEWRRV</sequence>
<keyword id="KW-0030">Aminoacyl-tRNA synthetase</keyword>
<keyword id="KW-0067">ATP-binding</keyword>
<keyword id="KW-0963">Cytoplasm</keyword>
<keyword id="KW-0436">Ligase</keyword>
<keyword id="KW-0479">Metal-binding</keyword>
<keyword id="KW-0547">Nucleotide-binding</keyword>
<keyword id="KW-0648">Protein biosynthesis</keyword>
<keyword id="KW-0862">Zinc</keyword>
<gene>
    <name evidence="1" type="primary">cysS</name>
    <name type="ordered locus">Bcep1808_1980</name>
</gene>
<evidence type="ECO:0000255" key="1">
    <source>
        <dbReference type="HAMAP-Rule" id="MF_00041"/>
    </source>
</evidence>
<reference key="1">
    <citation type="submission" date="2007-03" db="EMBL/GenBank/DDBJ databases">
        <title>Complete sequence of chromosome 1 of Burkholderia vietnamiensis G4.</title>
        <authorList>
            <consortium name="US DOE Joint Genome Institute"/>
            <person name="Copeland A."/>
            <person name="Lucas S."/>
            <person name="Lapidus A."/>
            <person name="Barry K."/>
            <person name="Detter J.C."/>
            <person name="Glavina del Rio T."/>
            <person name="Hammon N."/>
            <person name="Israni S."/>
            <person name="Dalin E."/>
            <person name="Tice H."/>
            <person name="Pitluck S."/>
            <person name="Chain P."/>
            <person name="Malfatti S."/>
            <person name="Shin M."/>
            <person name="Vergez L."/>
            <person name="Schmutz J."/>
            <person name="Larimer F."/>
            <person name="Land M."/>
            <person name="Hauser L."/>
            <person name="Kyrpides N."/>
            <person name="Tiedje J."/>
            <person name="Richardson P."/>
        </authorList>
    </citation>
    <scope>NUCLEOTIDE SEQUENCE [LARGE SCALE GENOMIC DNA]</scope>
    <source>
        <strain>G4 / LMG 22486</strain>
    </source>
</reference>
<feature type="chain" id="PRO_1000006573" description="Cysteine--tRNA ligase">
    <location>
        <begin position="1"/>
        <end position="465"/>
    </location>
</feature>
<feature type="short sequence motif" description="'HIGH' region">
    <location>
        <begin position="32"/>
        <end position="42"/>
    </location>
</feature>
<feature type="short sequence motif" description="'KMSKS' region">
    <location>
        <begin position="271"/>
        <end position="275"/>
    </location>
</feature>
<feature type="binding site" evidence="1">
    <location>
        <position position="30"/>
    </location>
    <ligand>
        <name>Zn(2+)</name>
        <dbReference type="ChEBI" id="CHEBI:29105"/>
    </ligand>
</feature>
<feature type="binding site" evidence="1">
    <location>
        <position position="214"/>
    </location>
    <ligand>
        <name>Zn(2+)</name>
        <dbReference type="ChEBI" id="CHEBI:29105"/>
    </ligand>
</feature>
<feature type="binding site" evidence="1">
    <location>
        <position position="239"/>
    </location>
    <ligand>
        <name>Zn(2+)</name>
        <dbReference type="ChEBI" id="CHEBI:29105"/>
    </ligand>
</feature>
<feature type="binding site" evidence="1">
    <location>
        <position position="243"/>
    </location>
    <ligand>
        <name>Zn(2+)</name>
        <dbReference type="ChEBI" id="CHEBI:29105"/>
    </ligand>
</feature>
<feature type="binding site" evidence="1">
    <location>
        <position position="274"/>
    </location>
    <ligand>
        <name>ATP</name>
        <dbReference type="ChEBI" id="CHEBI:30616"/>
    </ligand>
</feature>
<accession>A4JFD0</accession>
<dbReference type="EC" id="6.1.1.16" evidence="1"/>
<dbReference type="EMBL" id="CP000614">
    <property type="protein sequence ID" value="ABO54983.1"/>
    <property type="molecule type" value="Genomic_DNA"/>
</dbReference>
<dbReference type="SMR" id="A4JFD0"/>
<dbReference type="KEGG" id="bvi:Bcep1808_1980"/>
<dbReference type="eggNOG" id="COG0215">
    <property type="taxonomic scope" value="Bacteria"/>
</dbReference>
<dbReference type="HOGENOM" id="CLU_013528_0_1_4"/>
<dbReference type="Proteomes" id="UP000002287">
    <property type="component" value="Chromosome 1"/>
</dbReference>
<dbReference type="GO" id="GO:0005829">
    <property type="term" value="C:cytosol"/>
    <property type="evidence" value="ECO:0007669"/>
    <property type="project" value="TreeGrafter"/>
</dbReference>
<dbReference type="GO" id="GO:0005524">
    <property type="term" value="F:ATP binding"/>
    <property type="evidence" value="ECO:0007669"/>
    <property type="project" value="UniProtKB-UniRule"/>
</dbReference>
<dbReference type="GO" id="GO:0004817">
    <property type="term" value="F:cysteine-tRNA ligase activity"/>
    <property type="evidence" value="ECO:0007669"/>
    <property type="project" value="UniProtKB-UniRule"/>
</dbReference>
<dbReference type="GO" id="GO:0008270">
    <property type="term" value="F:zinc ion binding"/>
    <property type="evidence" value="ECO:0007669"/>
    <property type="project" value="UniProtKB-UniRule"/>
</dbReference>
<dbReference type="GO" id="GO:0006423">
    <property type="term" value="P:cysteinyl-tRNA aminoacylation"/>
    <property type="evidence" value="ECO:0007669"/>
    <property type="project" value="UniProtKB-UniRule"/>
</dbReference>
<dbReference type="CDD" id="cd07963">
    <property type="entry name" value="Anticodon_Ia_Cys"/>
    <property type="match status" value="1"/>
</dbReference>
<dbReference type="CDD" id="cd00672">
    <property type="entry name" value="CysRS_core"/>
    <property type="match status" value="1"/>
</dbReference>
<dbReference type="FunFam" id="3.40.50.620:FF:000009">
    <property type="entry name" value="Cysteine--tRNA ligase"/>
    <property type="match status" value="1"/>
</dbReference>
<dbReference type="Gene3D" id="1.20.120.1910">
    <property type="entry name" value="Cysteine-tRNA ligase, C-terminal anti-codon recognition domain"/>
    <property type="match status" value="1"/>
</dbReference>
<dbReference type="Gene3D" id="3.40.50.620">
    <property type="entry name" value="HUPs"/>
    <property type="match status" value="1"/>
</dbReference>
<dbReference type="HAMAP" id="MF_00041">
    <property type="entry name" value="Cys_tRNA_synth"/>
    <property type="match status" value="1"/>
</dbReference>
<dbReference type="InterPro" id="IPR015803">
    <property type="entry name" value="Cys-tRNA-ligase"/>
</dbReference>
<dbReference type="InterPro" id="IPR015273">
    <property type="entry name" value="Cys-tRNA-synt_Ia_DALR"/>
</dbReference>
<dbReference type="InterPro" id="IPR024909">
    <property type="entry name" value="Cys-tRNA/MSH_ligase"/>
</dbReference>
<dbReference type="InterPro" id="IPR014729">
    <property type="entry name" value="Rossmann-like_a/b/a_fold"/>
</dbReference>
<dbReference type="InterPro" id="IPR032678">
    <property type="entry name" value="tRNA-synt_1_cat_dom"/>
</dbReference>
<dbReference type="InterPro" id="IPR009080">
    <property type="entry name" value="tRNAsynth_Ia_anticodon-bd"/>
</dbReference>
<dbReference type="NCBIfam" id="TIGR00435">
    <property type="entry name" value="cysS"/>
    <property type="match status" value="1"/>
</dbReference>
<dbReference type="PANTHER" id="PTHR10890:SF3">
    <property type="entry name" value="CYSTEINE--TRNA LIGASE, CYTOPLASMIC"/>
    <property type="match status" value="1"/>
</dbReference>
<dbReference type="PANTHER" id="PTHR10890">
    <property type="entry name" value="CYSTEINYL-TRNA SYNTHETASE"/>
    <property type="match status" value="1"/>
</dbReference>
<dbReference type="Pfam" id="PF09190">
    <property type="entry name" value="DALR_2"/>
    <property type="match status" value="1"/>
</dbReference>
<dbReference type="Pfam" id="PF01406">
    <property type="entry name" value="tRNA-synt_1e"/>
    <property type="match status" value="1"/>
</dbReference>
<dbReference type="PRINTS" id="PR00983">
    <property type="entry name" value="TRNASYNTHCYS"/>
</dbReference>
<dbReference type="SMART" id="SM00840">
    <property type="entry name" value="DALR_2"/>
    <property type="match status" value="1"/>
</dbReference>
<dbReference type="SUPFAM" id="SSF47323">
    <property type="entry name" value="Anticodon-binding domain of a subclass of class I aminoacyl-tRNA synthetases"/>
    <property type="match status" value="1"/>
</dbReference>
<dbReference type="SUPFAM" id="SSF52374">
    <property type="entry name" value="Nucleotidylyl transferase"/>
    <property type="match status" value="1"/>
</dbReference>
<organism>
    <name type="scientific">Burkholderia vietnamiensis (strain G4 / LMG 22486)</name>
    <name type="common">Burkholderia cepacia (strain R1808)</name>
    <dbReference type="NCBI Taxonomy" id="269482"/>
    <lineage>
        <taxon>Bacteria</taxon>
        <taxon>Pseudomonadati</taxon>
        <taxon>Pseudomonadota</taxon>
        <taxon>Betaproteobacteria</taxon>
        <taxon>Burkholderiales</taxon>
        <taxon>Burkholderiaceae</taxon>
        <taxon>Burkholderia</taxon>
        <taxon>Burkholderia cepacia complex</taxon>
    </lineage>
</organism>
<proteinExistence type="inferred from homology"/>